<reference key="1">
    <citation type="journal article" date="1994" name="Mol. Cell. Biol.">
        <title>Functional substitution of an essential yeast RNA polymerase subunit by a highly conserved mammalian counterpart.</title>
        <authorList>
            <person name="McKune K."/>
            <person name="Woychik N.A."/>
        </authorList>
    </citation>
    <scope>NUCLEOTIDE SEQUENCE [MRNA]</scope>
</reference>
<proteinExistence type="evidence at transcript level"/>
<sequence length="127" mass="14478">MSDNEDNFDGDDFDDVEEDEGLDDLENAEEEGQENVEILPSGERPQANQKRITTPYMTKYERARVLGTRALQIAMCAPVMVELEGETDPLLIAMKELKARKIPIIIRRYLPDGSYEDWGVDELIITD</sequence>
<dbReference type="EMBL" id="S69934">
    <property type="protein sequence ID" value="AAB30834.1"/>
    <property type="molecule type" value="mRNA"/>
</dbReference>
<dbReference type="PIR" id="A56067">
    <property type="entry name" value="A56067"/>
</dbReference>
<dbReference type="RefSeq" id="XP_003510326.1">
    <property type="nucleotide sequence ID" value="XM_003510278.3"/>
</dbReference>
<dbReference type="RefSeq" id="XP_007622837.1">
    <property type="nucleotide sequence ID" value="XM_007624647.2"/>
</dbReference>
<dbReference type="SMR" id="P61217"/>
<dbReference type="PaxDb" id="10029-XP_007622837.1"/>
<dbReference type="Ensembl" id="ENSCGRT00001030367.1">
    <property type="protein sequence ID" value="ENSCGRP00001026121.1"/>
    <property type="gene ID" value="ENSCGRG00001023541.1"/>
</dbReference>
<dbReference type="GeneID" id="100754156"/>
<dbReference type="CTD" id="5435"/>
<dbReference type="eggNOG" id="KOG3405">
    <property type="taxonomic scope" value="Eukaryota"/>
</dbReference>
<dbReference type="GeneTree" id="ENSGT00390000010415"/>
<dbReference type="OMA" id="TYMTKYE"/>
<dbReference type="OrthoDB" id="259769at2759"/>
<dbReference type="Proteomes" id="UP000694386">
    <property type="component" value="Unplaced"/>
</dbReference>
<dbReference type="Proteomes" id="UP001108280">
    <property type="component" value="Unplaced"/>
</dbReference>
<dbReference type="GO" id="GO:0001650">
    <property type="term" value="C:fibrillar center"/>
    <property type="evidence" value="ECO:0007669"/>
    <property type="project" value="Ensembl"/>
</dbReference>
<dbReference type="GO" id="GO:0005634">
    <property type="term" value="C:nucleus"/>
    <property type="evidence" value="ECO:0000250"/>
    <property type="project" value="UniProtKB"/>
</dbReference>
<dbReference type="GO" id="GO:0005736">
    <property type="term" value="C:RNA polymerase I complex"/>
    <property type="evidence" value="ECO:0007669"/>
    <property type="project" value="Ensembl"/>
</dbReference>
<dbReference type="GO" id="GO:0005665">
    <property type="term" value="C:RNA polymerase II, core complex"/>
    <property type="evidence" value="ECO:0000250"/>
    <property type="project" value="UniProtKB"/>
</dbReference>
<dbReference type="GO" id="GO:0005666">
    <property type="term" value="C:RNA polymerase III complex"/>
    <property type="evidence" value="ECO:0007669"/>
    <property type="project" value="Ensembl"/>
</dbReference>
<dbReference type="GO" id="GO:0003677">
    <property type="term" value="F:DNA binding"/>
    <property type="evidence" value="ECO:0007669"/>
    <property type="project" value="InterPro"/>
</dbReference>
<dbReference type="GO" id="GO:0003899">
    <property type="term" value="F:DNA-directed RNA polymerase activity"/>
    <property type="evidence" value="ECO:0007669"/>
    <property type="project" value="InterPro"/>
</dbReference>
<dbReference type="GO" id="GO:0006360">
    <property type="term" value="P:transcription by RNA polymerase I"/>
    <property type="evidence" value="ECO:0007669"/>
    <property type="project" value="TreeGrafter"/>
</dbReference>
<dbReference type="GO" id="GO:0006366">
    <property type="term" value="P:transcription by RNA polymerase II"/>
    <property type="evidence" value="ECO:0000250"/>
    <property type="project" value="UniProtKB"/>
</dbReference>
<dbReference type="GO" id="GO:0042797">
    <property type="term" value="P:tRNA transcription by RNA polymerase III"/>
    <property type="evidence" value="ECO:0007669"/>
    <property type="project" value="TreeGrafter"/>
</dbReference>
<dbReference type="FunFam" id="3.90.940.10:FF:000003">
    <property type="entry name" value="DNA-directed RNA polymerases I, II, and III subunit RPABC2"/>
    <property type="match status" value="1"/>
</dbReference>
<dbReference type="Gene3D" id="3.90.940.10">
    <property type="match status" value="1"/>
</dbReference>
<dbReference type="InterPro" id="IPR020708">
    <property type="entry name" value="DNA-dir_RNA_polK_14-18kDa_CS"/>
</dbReference>
<dbReference type="InterPro" id="IPR006110">
    <property type="entry name" value="Pol_omega/Rpo6/RPB6"/>
</dbReference>
<dbReference type="InterPro" id="IPR028363">
    <property type="entry name" value="RPB6"/>
</dbReference>
<dbReference type="InterPro" id="IPR036161">
    <property type="entry name" value="RPB6/omega-like_sf"/>
</dbReference>
<dbReference type="InterPro" id="IPR006111">
    <property type="entry name" value="Rpo6/Rpb6"/>
</dbReference>
<dbReference type="NCBIfam" id="NF002208">
    <property type="entry name" value="PRK01099.1-3"/>
    <property type="match status" value="1"/>
</dbReference>
<dbReference type="PANTHER" id="PTHR47227">
    <property type="entry name" value="DNA-DIRECTED RNA POLYMERASE SUBUNIT K"/>
    <property type="match status" value="1"/>
</dbReference>
<dbReference type="PANTHER" id="PTHR47227:SF5">
    <property type="entry name" value="DNA-DIRECTED RNA POLYMERASES I, II, AND III SUBUNIT RPABC2"/>
    <property type="match status" value="1"/>
</dbReference>
<dbReference type="Pfam" id="PF01192">
    <property type="entry name" value="RNA_pol_Rpb6"/>
    <property type="match status" value="1"/>
</dbReference>
<dbReference type="PIRSF" id="PIRSF500154">
    <property type="entry name" value="RPB6"/>
    <property type="match status" value="1"/>
</dbReference>
<dbReference type="PIRSF" id="PIRSF000778">
    <property type="entry name" value="RpoK/RPB6"/>
    <property type="match status" value="1"/>
</dbReference>
<dbReference type="SMART" id="SM01409">
    <property type="entry name" value="RNA_pol_Rpb6"/>
    <property type="match status" value="1"/>
</dbReference>
<dbReference type="SUPFAM" id="SSF63562">
    <property type="entry name" value="RPB6/omega subunit-like"/>
    <property type="match status" value="1"/>
</dbReference>
<dbReference type="PROSITE" id="PS01111">
    <property type="entry name" value="RNA_POL_K_14KD"/>
    <property type="match status" value="1"/>
</dbReference>
<feature type="initiator methionine" description="Removed" evidence="3">
    <location>
        <position position="1"/>
    </location>
</feature>
<feature type="chain" id="PRO_0000133798" description="DNA-directed RNA polymerases I, II, and III subunit RPABC2">
    <location>
        <begin position="2"/>
        <end position="127"/>
    </location>
</feature>
<feature type="region of interest" description="Disordered" evidence="4">
    <location>
        <begin position="1"/>
        <end position="53"/>
    </location>
</feature>
<feature type="compositionally biased region" description="Acidic residues" evidence="4">
    <location>
        <begin position="1"/>
        <end position="34"/>
    </location>
</feature>
<feature type="modified residue" description="N-acetylserine" evidence="3">
    <location>
        <position position="2"/>
    </location>
</feature>
<feature type="modified residue" description="Phosphoserine; by CK2" evidence="1">
    <location>
        <position position="2"/>
    </location>
</feature>
<gene>
    <name type="primary">POLR2F</name>
    <name type="synonym">POLRF</name>
</gene>
<accession>P61217</accession>
<accession>P41584</accession>
<evidence type="ECO:0000250" key="1">
    <source>
        <dbReference type="UniProtKB" id="O88828"/>
    </source>
</evidence>
<evidence type="ECO:0000250" key="2">
    <source>
        <dbReference type="UniProtKB" id="P20435"/>
    </source>
</evidence>
<evidence type="ECO:0000250" key="3">
    <source>
        <dbReference type="UniProtKB" id="P61218"/>
    </source>
</evidence>
<evidence type="ECO:0000256" key="4">
    <source>
        <dbReference type="SAM" id="MobiDB-lite"/>
    </source>
</evidence>
<evidence type="ECO:0000305" key="5"/>
<organism>
    <name type="scientific">Cricetulus griseus</name>
    <name type="common">Chinese hamster</name>
    <name type="synonym">Cricetulus barabensis griseus</name>
    <dbReference type="NCBI Taxonomy" id="10029"/>
    <lineage>
        <taxon>Eukaryota</taxon>
        <taxon>Metazoa</taxon>
        <taxon>Chordata</taxon>
        <taxon>Craniata</taxon>
        <taxon>Vertebrata</taxon>
        <taxon>Euteleostomi</taxon>
        <taxon>Mammalia</taxon>
        <taxon>Eutheria</taxon>
        <taxon>Euarchontoglires</taxon>
        <taxon>Glires</taxon>
        <taxon>Rodentia</taxon>
        <taxon>Myomorpha</taxon>
        <taxon>Muroidea</taxon>
        <taxon>Cricetidae</taxon>
        <taxon>Cricetinae</taxon>
        <taxon>Cricetulus</taxon>
    </lineage>
</organism>
<name>RPAB2_CRIGR</name>
<protein>
    <recommendedName>
        <fullName>DNA-directed RNA polymerases I, II, and III subunit RPABC2</fullName>
        <shortName>RNA polymerases I, II, and III subunit ABC2</shortName>
    </recommendedName>
    <alternativeName>
        <fullName>DNA-directed RNA polymerase II subunit F</fullName>
    </alternativeName>
    <alternativeName>
        <fullName>RPB6 homolog</fullName>
    </alternativeName>
</protein>
<keyword id="KW-0007">Acetylation</keyword>
<keyword id="KW-0240">DNA-directed RNA polymerase</keyword>
<keyword id="KW-0539">Nucleus</keyword>
<keyword id="KW-0597">Phosphoprotein</keyword>
<keyword id="KW-0804">Transcription</keyword>
<comment type="function">
    <text evidence="2 3">DNA-dependent RNA polymerase catalyzes the transcription of DNA into RNA using the four ribonucleoside triphosphates as substrates. Common component of RNA polymerases I, II, and III which synthesize ribosomal RNA precursors, mRNA precursors and many functional non-coding RNAs, and small RNAs, such as 5S rRNA and tRNAs, respectively. Pol II is the central component of the basal RNA polymerase II transcription machinery. Pols are composed of mobile elements that move relative to each other. In Pol II, POLR2F/RPABC2 is part of the clamp element and together with parts of POLR2A/RPB1 and POLR2B/RPB2 forms a pocket to which the POLR2D/RPB4-POLR2G/RPB7 subcomplex binds.</text>
</comment>
<comment type="subunit">
    <text evidence="3">Component of the RNA polymerase I (Pol I), RNA polymerase II (Pol II) and RNA polymerase III (Pol III) complexes consisting of at least 13, 12 and 17 subunits, respectively (By similarity). Pol I complex consists of a ten-subunit catalytic core composed of POLR1A/RPA1, POLR1B/RPA2, POLR1C/RPAC1, POLR1D/RPAC2, POLR1H/RPA12, POLR2E/RPABC1, POLR2F/RPABC2, POLR2H/RPABC3, POLR2K/RPABC4 and POLR2L/RPABC5; a mobile stalk subunit POLR1F/RPA43 protruding from the core and additional subunits homologous to general transcription factors POLR1E/RPA49 and POLR1G/RPA34. Part of Pol I pre-initiation complex (PIC), in which Pol I core assembles with RRN3 and promoter-bound UTBF and SL1/TIF-IB complex (By similarity). Pol II complex contains a ten-subunit catalytic core composed of POLR2A/RPB1, POLR2B/RPB2, POLR2C/RPB3, POLR2I/RPB9, POLR2J/RPB11, POLR2E/RPABC1, POLR2F/RPABC2, POLR2H/RPABC3, POLR2K/RPABC4 and POLR2L/RPABC5 and a mobile stalk composed of two subunits POLR2D/RPB4 and POLR2G/RPB7. Part of Pol II(G) complex, in which Pol II core associates with an additional subunit POLR2M; unlike conventional Pol II, Pol II(G) functions as a transcriptional repressor. Part of TBP-based Pol II pre-initiation complex (PIC), in which Pol II core assembles with general transcription factors and other specific initiation factors including GTF2E1, GTF2E2, GTF2F1, GTF2F2, TCEA1, ERCC2, ERCC3, GTF2H2, GTF2H3, GTF2H4, GTF2H5, GTF2A1, GTF2A2, GTF2B and TBP; this large multi-subunit PIC complex mediates DNA unwinding and targets Pol II core to the transcription start site where the first phosphodiester bond forms. Pol III complex consists of a ten-subunit catalytic core composed of POLR3A/RPC1, POLR3B/RPC2, POLR1C/RPAC1, POLR1D/RPAC2, POLR3K/RPC10, POLR2E/RPABC1, POLR2F/RPABC2, POLR2H/RPABC3, POLR2K/RPABC4 and POLR2L/RPABC5; a mobile stalk composed of two subunits POLR3H/RPC8 and CRCP/RPC9, protruding from the core and functioning primarily in transcription initiation; and additional subunits homologous to general transcription factors of the RNA polymerase II machinery, POLR3C/RPC3-POLR3F/RPC6-POLR3G/RPC7 heterotrimer required for transcription initiation and POLR3D/RPC4-POLR3E/RPC5 heterodimer involved in both transcription initiation and termination.</text>
</comment>
<comment type="subcellular location">
    <subcellularLocation>
        <location evidence="3">Nucleus</location>
    </subcellularLocation>
    <subcellularLocation>
        <location evidence="3">Nucleus</location>
        <location evidence="3">Nucleolus</location>
    </subcellularLocation>
</comment>
<comment type="similarity">
    <text evidence="5">Belongs to the archaeal Rpo6/eukaryotic RPB6 RNA polymerase subunit family.</text>
</comment>